<reference key="1">
    <citation type="submission" date="2008-02" db="EMBL/GenBank/DDBJ databases">
        <title>Complete sequence of Shewanella woodyi ATCC 51908.</title>
        <authorList>
            <consortium name="US DOE Joint Genome Institute"/>
            <person name="Copeland A."/>
            <person name="Lucas S."/>
            <person name="Lapidus A."/>
            <person name="Glavina del Rio T."/>
            <person name="Dalin E."/>
            <person name="Tice H."/>
            <person name="Bruce D."/>
            <person name="Goodwin L."/>
            <person name="Pitluck S."/>
            <person name="Sims D."/>
            <person name="Brettin T."/>
            <person name="Detter J.C."/>
            <person name="Han C."/>
            <person name="Kuske C.R."/>
            <person name="Schmutz J."/>
            <person name="Larimer F."/>
            <person name="Land M."/>
            <person name="Hauser L."/>
            <person name="Kyrpides N."/>
            <person name="Lykidis A."/>
            <person name="Zhao J.-S."/>
            <person name="Richardson P."/>
        </authorList>
    </citation>
    <scope>NUCLEOTIDE SEQUENCE [LARGE SCALE GENOMIC DNA]</scope>
    <source>
        <strain>ATCC 51908 / MS32</strain>
    </source>
</reference>
<organism>
    <name type="scientific">Shewanella woodyi (strain ATCC 51908 / MS32)</name>
    <dbReference type="NCBI Taxonomy" id="392500"/>
    <lineage>
        <taxon>Bacteria</taxon>
        <taxon>Pseudomonadati</taxon>
        <taxon>Pseudomonadota</taxon>
        <taxon>Gammaproteobacteria</taxon>
        <taxon>Alteromonadales</taxon>
        <taxon>Shewanellaceae</taxon>
        <taxon>Shewanella</taxon>
    </lineage>
</organism>
<keyword id="KW-0067">ATP-binding</keyword>
<keyword id="KW-0963">Cytoplasm</keyword>
<keyword id="KW-0235">DNA replication</keyword>
<keyword id="KW-0238">DNA-binding</keyword>
<keyword id="KW-0446">Lipid-binding</keyword>
<keyword id="KW-0547">Nucleotide-binding</keyword>
<keyword id="KW-1185">Reference proteome</keyword>
<proteinExistence type="inferred from homology"/>
<dbReference type="EMBL" id="CP000961">
    <property type="protein sequence ID" value="ACA84302.1"/>
    <property type="molecule type" value="Genomic_DNA"/>
</dbReference>
<dbReference type="RefSeq" id="WP_012322651.1">
    <property type="nucleotide sequence ID" value="NC_010506.1"/>
</dbReference>
<dbReference type="SMR" id="B1KCX3"/>
<dbReference type="STRING" id="392500.Swoo_0001"/>
<dbReference type="KEGG" id="swd:Swoo_0001"/>
<dbReference type="eggNOG" id="COG0593">
    <property type="taxonomic scope" value="Bacteria"/>
</dbReference>
<dbReference type="HOGENOM" id="CLU_026910_0_1_6"/>
<dbReference type="Proteomes" id="UP000002168">
    <property type="component" value="Chromosome"/>
</dbReference>
<dbReference type="GO" id="GO:0005737">
    <property type="term" value="C:cytoplasm"/>
    <property type="evidence" value="ECO:0007669"/>
    <property type="project" value="UniProtKB-SubCell"/>
</dbReference>
<dbReference type="GO" id="GO:0005886">
    <property type="term" value="C:plasma membrane"/>
    <property type="evidence" value="ECO:0007669"/>
    <property type="project" value="TreeGrafter"/>
</dbReference>
<dbReference type="GO" id="GO:0005524">
    <property type="term" value="F:ATP binding"/>
    <property type="evidence" value="ECO:0007669"/>
    <property type="project" value="UniProtKB-UniRule"/>
</dbReference>
<dbReference type="GO" id="GO:0016887">
    <property type="term" value="F:ATP hydrolysis activity"/>
    <property type="evidence" value="ECO:0007669"/>
    <property type="project" value="InterPro"/>
</dbReference>
<dbReference type="GO" id="GO:0003688">
    <property type="term" value="F:DNA replication origin binding"/>
    <property type="evidence" value="ECO:0007669"/>
    <property type="project" value="UniProtKB-UniRule"/>
</dbReference>
<dbReference type="GO" id="GO:0008289">
    <property type="term" value="F:lipid binding"/>
    <property type="evidence" value="ECO:0007669"/>
    <property type="project" value="UniProtKB-KW"/>
</dbReference>
<dbReference type="GO" id="GO:0006270">
    <property type="term" value="P:DNA replication initiation"/>
    <property type="evidence" value="ECO:0007669"/>
    <property type="project" value="UniProtKB-UniRule"/>
</dbReference>
<dbReference type="GO" id="GO:0006275">
    <property type="term" value="P:regulation of DNA replication"/>
    <property type="evidence" value="ECO:0007669"/>
    <property type="project" value="UniProtKB-UniRule"/>
</dbReference>
<dbReference type="CDD" id="cd00009">
    <property type="entry name" value="AAA"/>
    <property type="match status" value="1"/>
</dbReference>
<dbReference type="CDD" id="cd06571">
    <property type="entry name" value="Bac_DnaA_C"/>
    <property type="match status" value="1"/>
</dbReference>
<dbReference type="FunFam" id="1.10.1750.10:FF:000001">
    <property type="entry name" value="Chromosomal replication initiator protein DnaA"/>
    <property type="match status" value="1"/>
</dbReference>
<dbReference type="FunFam" id="1.10.8.60:FF:000003">
    <property type="entry name" value="Chromosomal replication initiator protein DnaA"/>
    <property type="match status" value="1"/>
</dbReference>
<dbReference type="FunFam" id="3.30.300.180:FF:000001">
    <property type="entry name" value="Chromosomal replication initiator protein DnaA"/>
    <property type="match status" value="1"/>
</dbReference>
<dbReference type="FunFam" id="3.40.50.300:FF:000103">
    <property type="entry name" value="Chromosomal replication initiator protein DnaA"/>
    <property type="match status" value="1"/>
</dbReference>
<dbReference type="Gene3D" id="1.10.1750.10">
    <property type="match status" value="1"/>
</dbReference>
<dbReference type="Gene3D" id="1.10.8.60">
    <property type="match status" value="1"/>
</dbReference>
<dbReference type="Gene3D" id="3.30.300.180">
    <property type="match status" value="1"/>
</dbReference>
<dbReference type="Gene3D" id="3.40.50.300">
    <property type="entry name" value="P-loop containing nucleotide triphosphate hydrolases"/>
    <property type="match status" value="1"/>
</dbReference>
<dbReference type="HAMAP" id="MF_00377">
    <property type="entry name" value="DnaA_bact"/>
    <property type="match status" value="1"/>
</dbReference>
<dbReference type="InterPro" id="IPR003593">
    <property type="entry name" value="AAA+_ATPase"/>
</dbReference>
<dbReference type="InterPro" id="IPR001957">
    <property type="entry name" value="Chromosome_initiator_DnaA"/>
</dbReference>
<dbReference type="InterPro" id="IPR020591">
    <property type="entry name" value="Chromosome_initiator_DnaA-like"/>
</dbReference>
<dbReference type="InterPro" id="IPR018312">
    <property type="entry name" value="Chromosome_initiator_DnaA_CS"/>
</dbReference>
<dbReference type="InterPro" id="IPR013159">
    <property type="entry name" value="DnaA_C"/>
</dbReference>
<dbReference type="InterPro" id="IPR013317">
    <property type="entry name" value="DnaA_dom"/>
</dbReference>
<dbReference type="InterPro" id="IPR024633">
    <property type="entry name" value="DnaA_N_dom"/>
</dbReference>
<dbReference type="InterPro" id="IPR038454">
    <property type="entry name" value="DnaA_N_sf"/>
</dbReference>
<dbReference type="InterPro" id="IPR055199">
    <property type="entry name" value="Hda_lid"/>
</dbReference>
<dbReference type="InterPro" id="IPR027417">
    <property type="entry name" value="P-loop_NTPase"/>
</dbReference>
<dbReference type="InterPro" id="IPR010921">
    <property type="entry name" value="Trp_repressor/repl_initiator"/>
</dbReference>
<dbReference type="NCBIfam" id="TIGR00362">
    <property type="entry name" value="DnaA"/>
    <property type="match status" value="1"/>
</dbReference>
<dbReference type="PANTHER" id="PTHR30050">
    <property type="entry name" value="CHROMOSOMAL REPLICATION INITIATOR PROTEIN DNAA"/>
    <property type="match status" value="1"/>
</dbReference>
<dbReference type="PANTHER" id="PTHR30050:SF2">
    <property type="entry name" value="CHROMOSOMAL REPLICATION INITIATOR PROTEIN DNAA"/>
    <property type="match status" value="1"/>
</dbReference>
<dbReference type="Pfam" id="PF00308">
    <property type="entry name" value="Bac_DnaA"/>
    <property type="match status" value="1"/>
</dbReference>
<dbReference type="Pfam" id="PF08299">
    <property type="entry name" value="Bac_DnaA_C"/>
    <property type="match status" value="1"/>
</dbReference>
<dbReference type="Pfam" id="PF11638">
    <property type="entry name" value="DnaA_N"/>
    <property type="match status" value="1"/>
</dbReference>
<dbReference type="Pfam" id="PF22688">
    <property type="entry name" value="Hda_lid"/>
    <property type="match status" value="1"/>
</dbReference>
<dbReference type="PRINTS" id="PR00051">
    <property type="entry name" value="DNAA"/>
</dbReference>
<dbReference type="SMART" id="SM00382">
    <property type="entry name" value="AAA"/>
    <property type="match status" value="1"/>
</dbReference>
<dbReference type="SMART" id="SM00760">
    <property type="entry name" value="Bac_DnaA_C"/>
    <property type="match status" value="1"/>
</dbReference>
<dbReference type="SUPFAM" id="SSF52540">
    <property type="entry name" value="P-loop containing nucleoside triphosphate hydrolases"/>
    <property type="match status" value="1"/>
</dbReference>
<dbReference type="SUPFAM" id="SSF48295">
    <property type="entry name" value="TrpR-like"/>
    <property type="match status" value="1"/>
</dbReference>
<dbReference type="PROSITE" id="PS01008">
    <property type="entry name" value="DNAA"/>
    <property type="match status" value="1"/>
</dbReference>
<protein>
    <recommendedName>
        <fullName evidence="1">Chromosomal replication initiator protein DnaA</fullName>
    </recommendedName>
</protein>
<sequence length="462" mass="52210">MAVSLWQQCIGRLQDELSAQQFSMWIRPLQAEMDGDTLVLYAPNRFVLDWVRDKYINIINQFFTEQMGSDAPKLRFDIGSRPSAPKPIQATAAVVKPKLESSPQKSQTSFNVNAPEPAATANHRSNINPTYQFENFVEGKSNQLGKAAALQVAENPGGAYNPLFLYGGTGLGKTHLLHAVGNGIIKNKPNAKVVYMHSERFVQDMVKALQNNAIEEFKRYYRSVDALFIDDIQFFANKDRSQEEFFHTFNALLEGNHQIILTSDRYPKEIDGVEDRLKSRFGWGLTVAIEPPELETRVAILMRKAQESGINLPDEVAFFIAKRLRSNVRELEGALNRVIANANFTGRPITIDFVREALRDLLALQEKLVTIDNIQKTVAEYYKIKMADMLSKRRSRSVARPRQVAMALSKELTNHSLPEIGDAFGGRDHTTVLHACRKIAQLREESHDTKEDYANLIRTLSS</sequence>
<gene>
    <name evidence="1" type="primary">dnaA</name>
    <name type="ordered locus">Swoo_0001</name>
</gene>
<feature type="chain" id="PRO_1000122017" description="Chromosomal replication initiator protein DnaA">
    <location>
        <begin position="1"/>
        <end position="462"/>
    </location>
</feature>
<feature type="region of interest" description="Domain I, interacts with DnaA modulators" evidence="1">
    <location>
        <begin position="1"/>
        <end position="84"/>
    </location>
</feature>
<feature type="region of interest" description="Domain II" evidence="1">
    <location>
        <begin position="84"/>
        <end position="125"/>
    </location>
</feature>
<feature type="region of interest" description="Domain III, AAA+ region" evidence="1">
    <location>
        <begin position="126"/>
        <end position="342"/>
    </location>
</feature>
<feature type="region of interest" description="Domain IV, binds dsDNA" evidence="1">
    <location>
        <begin position="343"/>
        <end position="462"/>
    </location>
</feature>
<feature type="binding site" evidence="1">
    <location>
        <position position="170"/>
    </location>
    <ligand>
        <name>ATP</name>
        <dbReference type="ChEBI" id="CHEBI:30616"/>
    </ligand>
</feature>
<feature type="binding site" evidence="1">
    <location>
        <position position="172"/>
    </location>
    <ligand>
        <name>ATP</name>
        <dbReference type="ChEBI" id="CHEBI:30616"/>
    </ligand>
</feature>
<feature type="binding site" evidence="1">
    <location>
        <position position="173"/>
    </location>
    <ligand>
        <name>ATP</name>
        <dbReference type="ChEBI" id="CHEBI:30616"/>
    </ligand>
</feature>
<feature type="binding site" evidence="1">
    <location>
        <position position="174"/>
    </location>
    <ligand>
        <name>ATP</name>
        <dbReference type="ChEBI" id="CHEBI:30616"/>
    </ligand>
</feature>
<comment type="function">
    <text evidence="1">Plays an essential role in the initiation and regulation of chromosomal replication. ATP-DnaA binds to the origin of replication (oriC) to initiate formation of the DNA replication initiation complex once per cell cycle. Binds the DnaA box (a 9 base pair repeat at the origin) and separates the double-stranded (ds)DNA. Forms a right-handed helical filament on oriC DNA; dsDNA binds to the exterior of the filament while single-stranded (ss)DNA is stabiized in the filament's interior. The ATP-DnaA-oriC complex binds and stabilizes one strand of the AT-rich DNA unwinding element (DUE), permitting loading of DNA polymerase. After initiation quickly degrades to an ADP-DnaA complex that is not apt for DNA replication. Binds acidic phospholipids.</text>
</comment>
<comment type="subunit">
    <text evidence="1">Oligomerizes as a right-handed, spiral filament on DNA at oriC.</text>
</comment>
<comment type="subcellular location">
    <subcellularLocation>
        <location evidence="1">Cytoplasm</location>
    </subcellularLocation>
</comment>
<comment type="domain">
    <text evidence="1">Domain I is involved in oligomerization and binding regulators, domain II is flexibile and of varying length in different bacteria, domain III forms the AAA+ region, while domain IV binds dsDNA.</text>
</comment>
<comment type="similarity">
    <text evidence="1">Belongs to the DnaA family.</text>
</comment>
<name>DNAA_SHEWM</name>
<accession>B1KCX3</accession>
<evidence type="ECO:0000255" key="1">
    <source>
        <dbReference type="HAMAP-Rule" id="MF_00377"/>
    </source>
</evidence>